<sequence>MTTQLSVNVNKIAVLRNSRGGTDPDVLQAARTCIAAGAHGITVHPRPDQRHIRAGDVLALSALTREHAVEFNIEGNPFAPPRAGYPGLLELCRATRPEQITLVPDGDGQLTSDHGFDFAQDTTQLAELIAAFKAVGSRVSLFVDAGNPDIAGAAALGADRVELYTGPYAHAHASGQTDTALALFADAGRRASAAGLGINAGHDLSQANLGDFLAAVPGVLEVSIGHALIGEALYQGLEATVRAYVDILRGSQVGA</sequence>
<keyword id="KW-0963">Cytoplasm</keyword>
<keyword id="KW-0664">Pyridoxine biosynthesis</keyword>
<keyword id="KW-1185">Reference proteome</keyword>
<keyword id="KW-0808">Transferase</keyword>
<feature type="chain" id="PRO_0000231859" description="Pyridoxine 5'-phosphate synthase">
    <location>
        <begin position="1"/>
        <end position="255"/>
    </location>
</feature>
<feature type="active site" description="Proton acceptor" evidence="1">
    <location>
        <position position="44"/>
    </location>
</feature>
<feature type="active site" description="Proton acceptor" evidence="1">
    <location>
        <position position="74"/>
    </location>
</feature>
<feature type="active site" description="Proton donor" evidence="1">
    <location>
        <position position="202"/>
    </location>
</feature>
<feature type="binding site" evidence="1">
    <location>
        <position position="8"/>
    </location>
    <ligand>
        <name>3-amino-2-oxopropyl phosphate</name>
        <dbReference type="ChEBI" id="CHEBI:57279"/>
    </ligand>
</feature>
<feature type="binding site" evidence="1">
    <location>
        <position position="19"/>
    </location>
    <ligand>
        <name>3-amino-2-oxopropyl phosphate</name>
        <dbReference type="ChEBI" id="CHEBI:57279"/>
    </ligand>
</feature>
<feature type="binding site" evidence="1">
    <location>
        <position position="46"/>
    </location>
    <ligand>
        <name>1-deoxy-D-xylulose 5-phosphate</name>
        <dbReference type="ChEBI" id="CHEBI:57792"/>
    </ligand>
</feature>
<feature type="binding site" evidence="1">
    <location>
        <position position="51"/>
    </location>
    <ligand>
        <name>1-deoxy-D-xylulose 5-phosphate</name>
        <dbReference type="ChEBI" id="CHEBI:57792"/>
    </ligand>
</feature>
<feature type="binding site" evidence="1">
    <location>
        <position position="111"/>
    </location>
    <ligand>
        <name>1-deoxy-D-xylulose 5-phosphate</name>
        <dbReference type="ChEBI" id="CHEBI:57792"/>
    </ligand>
</feature>
<feature type="binding site" evidence="1">
    <location>
        <position position="203"/>
    </location>
    <ligand>
        <name>3-amino-2-oxopropyl phosphate</name>
        <dbReference type="ChEBI" id="CHEBI:57279"/>
    </ligand>
</feature>
<feature type="binding site" evidence="1">
    <location>
        <begin position="225"/>
        <end position="226"/>
    </location>
    <ligand>
        <name>3-amino-2-oxopropyl phosphate</name>
        <dbReference type="ChEBI" id="CHEBI:57279"/>
    </ligand>
</feature>
<feature type="site" description="Transition state stabilizer" evidence="1">
    <location>
        <position position="162"/>
    </location>
</feature>
<accession>Q5H704</accession>
<proteinExistence type="inferred from homology"/>
<organism>
    <name type="scientific">Xanthomonas oryzae pv. oryzae (strain KACC10331 / KXO85)</name>
    <dbReference type="NCBI Taxonomy" id="291331"/>
    <lineage>
        <taxon>Bacteria</taxon>
        <taxon>Pseudomonadati</taxon>
        <taxon>Pseudomonadota</taxon>
        <taxon>Gammaproteobacteria</taxon>
        <taxon>Lysobacterales</taxon>
        <taxon>Lysobacteraceae</taxon>
        <taxon>Xanthomonas</taxon>
    </lineage>
</organism>
<dbReference type="EC" id="2.6.99.2" evidence="1"/>
<dbReference type="EMBL" id="AE013598">
    <property type="protein sequence ID" value="AAW73266.1"/>
    <property type="molecule type" value="Genomic_DNA"/>
</dbReference>
<dbReference type="SMR" id="Q5H704"/>
<dbReference type="STRING" id="291331.XOO0012"/>
<dbReference type="KEGG" id="xoo:XOO0012"/>
<dbReference type="HOGENOM" id="CLU_074563_1_0_6"/>
<dbReference type="UniPathway" id="UPA00244">
    <property type="reaction ID" value="UER00313"/>
</dbReference>
<dbReference type="Proteomes" id="UP000006735">
    <property type="component" value="Chromosome"/>
</dbReference>
<dbReference type="GO" id="GO:0005829">
    <property type="term" value="C:cytosol"/>
    <property type="evidence" value="ECO:0007669"/>
    <property type="project" value="TreeGrafter"/>
</dbReference>
<dbReference type="GO" id="GO:0033856">
    <property type="term" value="F:pyridoxine 5'-phosphate synthase activity"/>
    <property type="evidence" value="ECO:0007669"/>
    <property type="project" value="UniProtKB-EC"/>
</dbReference>
<dbReference type="GO" id="GO:0008615">
    <property type="term" value="P:pyridoxine biosynthetic process"/>
    <property type="evidence" value="ECO:0007669"/>
    <property type="project" value="UniProtKB-UniRule"/>
</dbReference>
<dbReference type="CDD" id="cd00003">
    <property type="entry name" value="PNPsynthase"/>
    <property type="match status" value="1"/>
</dbReference>
<dbReference type="FunFam" id="3.20.20.70:FF:000150">
    <property type="entry name" value="Pyridoxine 5'-phosphate synthase"/>
    <property type="match status" value="1"/>
</dbReference>
<dbReference type="Gene3D" id="3.20.20.70">
    <property type="entry name" value="Aldolase class I"/>
    <property type="match status" value="1"/>
</dbReference>
<dbReference type="HAMAP" id="MF_00279">
    <property type="entry name" value="PdxJ"/>
    <property type="match status" value="1"/>
</dbReference>
<dbReference type="InterPro" id="IPR013785">
    <property type="entry name" value="Aldolase_TIM"/>
</dbReference>
<dbReference type="InterPro" id="IPR004569">
    <property type="entry name" value="PyrdxlP_synth_PdxJ"/>
</dbReference>
<dbReference type="InterPro" id="IPR036130">
    <property type="entry name" value="Pyridoxine-5'_phos_synth"/>
</dbReference>
<dbReference type="NCBIfam" id="TIGR00559">
    <property type="entry name" value="pdxJ"/>
    <property type="match status" value="1"/>
</dbReference>
<dbReference type="NCBIfam" id="NF003626">
    <property type="entry name" value="PRK05265.1-4"/>
    <property type="match status" value="1"/>
</dbReference>
<dbReference type="PANTHER" id="PTHR30456">
    <property type="entry name" value="PYRIDOXINE 5'-PHOSPHATE SYNTHASE"/>
    <property type="match status" value="1"/>
</dbReference>
<dbReference type="PANTHER" id="PTHR30456:SF0">
    <property type="entry name" value="PYRIDOXINE 5'-PHOSPHATE SYNTHASE"/>
    <property type="match status" value="1"/>
</dbReference>
<dbReference type="Pfam" id="PF03740">
    <property type="entry name" value="PdxJ"/>
    <property type="match status" value="1"/>
</dbReference>
<dbReference type="SUPFAM" id="SSF63892">
    <property type="entry name" value="Pyridoxine 5'-phosphate synthase"/>
    <property type="match status" value="1"/>
</dbReference>
<comment type="function">
    <text evidence="1">Catalyzes the complicated ring closure reaction between the two acyclic compounds 1-deoxy-D-xylulose-5-phosphate (DXP) and 3-amino-2-oxopropyl phosphate (1-amino-acetone-3-phosphate or AAP) to form pyridoxine 5'-phosphate (PNP) and inorganic phosphate.</text>
</comment>
<comment type="catalytic activity">
    <reaction evidence="1">
        <text>3-amino-2-oxopropyl phosphate + 1-deoxy-D-xylulose 5-phosphate = pyridoxine 5'-phosphate + phosphate + 2 H2O + H(+)</text>
        <dbReference type="Rhea" id="RHEA:15265"/>
        <dbReference type="ChEBI" id="CHEBI:15377"/>
        <dbReference type="ChEBI" id="CHEBI:15378"/>
        <dbReference type="ChEBI" id="CHEBI:43474"/>
        <dbReference type="ChEBI" id="CHEBI:57279"/>
        <dbReference type="ChEBI" id="CHEBI:57792"/>
        <dbReference type="ChEBI" id="CHEBI:58589"/>
        <dbReference type="EC" id="2.6.99.2"/>
    </reaction>
</comment>
<comment type="pathway">
    <text evidence="1">Cofactor biosynthesis; pyridoxine 5'-phosphate biosynthesis; pyridoxine 5'-phosphate from D-erythrose 4-phosphate: step 5/5.</text>
</comment>
<comment type="subunit">
    <text evidence="1">Homooctamer; tetramer of dimers.</text>
</comment>
<comment type="subcellular location">
    <subcellularLocation>
        <location evidence="1">Cytoplasm</location>
    </subcellularLocation>
</comment>
<comment type="similarity">
    <text evidence="1">Belongs to the PNP synthase family.</text>
</comment>
<name>PDXJ_XANOR</name>
<reference key="1">
    <citation type="journal article" date="2005" name="Nucleic Acids Res.">
        <title>The genome sequence of Xanthomonas oryzae pathovar oryzae KACC10331, the bacterial blight pathogen of rice.</title>
        <authorList>
            <person name="Lee B.-M."/>
            <person name="Park Y.-J."/>
            <person name="Park D.-S."/>
            <person name="Kang H.-W."/>
            <person name="Kim J.-G."/>
            <person name="Song E.-S."/>
            <person name="Park I.-C."/>
            <person name="Yoon U.-H."/>
            <person name="Hahn J.-H."/>
            <person name="Koo B.-S."/>
            <person name="Lee G.-B."/>
            <person name="Kim H."/>
            <person name="Park H.-S."/>
            <person name="Yoon K.-O."/>
            <person name="Kim J.-H."/>
            <person name="Jung C.-H."/>
            <person name="Koh N.-H."/>
            <person name="Seo J.-S."/>
            <person name="Go S.-J."/>
        </authorList>
    </citation>
    <scope>NUCLEOTIDE SEQUENCE [LARGE SCALE GENOMIC DNA]</scope>
    <source>
        <strain>KACC10331 / KXO85</strain>
    </source>
</reference>
<evidence type="ECO:0000255" key="1">
    <source>
        <dbReference type="HAMAP-Rule" id="MF_00279"/>
    </source>
</evidence>
<protein>
    <recommendedName>
        <fullName evidence="1">Pyridoxine 5'-phosphate synthase</fullName>
        <shortName evidence="1">PNP synthase</shortName>
        <ecNumber evidence="1">2.6.99.2</ecNumber>
    </recommendedName>
</protein>
<gene>
    <name evidence="1" type="primary">pdxJ</name>
    <name type="ordered locus">XOO0012</name>
</gene>